<gene>
    <name type="primary">dsbI</name>
    <name type="ordered locus">CJJ81176_0881</name>
</gene>
<reference key="1">
    <citation type="journal article" date="1996" name="J. Bacteriol.">
        <title>Molecular cloning and site-specific mutagenesis of a gene involved in arylsulfatase production in Campylobacter jejuni.</title>
        <authorList>
            <person name="Yao R."/>
            <person name="Guerry P."/>
        </authorList>
    </citation>
    <scope>NUCLEOTIDE SEQUENCE [GENOMIC DNA]</scope>
</reference>
<reference key="2">
    <citation type="submission" date="2006-12" db="EMBL/GenBank/DDBJ databases">
        <authorList>
            <person name="Fouts D.E."/>
            <person name="Nelson K.E."/>
            <person name="Sebastian Y."/>
        </authorList>
    </citation>
    <scope>NUCLEOTIDE SEQUENCE [LARGE SCALE GENOMIC DNA]</scope>
    <source>
        <strain>81-176</strain>
    </source>
</reference>
<protein>
    <recommendedName>
        <fullName>Putative protein-disulfide oxidoreductase DsbI</fullName>
    </recommendedName>
</protein>
<comment type="function">
    <text evidence="1">Required for disulfide bond formation in some proteins. Part of a redox system composed of DsbI and DsbL that mediates formation of an essential disulfide bond in AssT (By similarity).</text>
</comment>
<comment type="subunit">
    <text evidence="1">Interacts with DsbL.</text>
</comment>
<comment type="subcellular location">
    <subcellularLocation>
        <location evidence="1">Cell inner membrane</location>
        <topology evidence="1">Multi-pass membrane protein</topology>
    </subcellularLocation>
</comment>
<comment type="similarity">
    <text evidence="3">Belongs to the DsbB family. DsbI subfamily.</text>
</comment>
<comment type="caution">
    <text evidence="3">Was originally given the gene name dsbB; however this seems to belong to a different DsbB subfamily.</text>
</comment>
<comment type="sequence caution" evidence="3">
    <conflict type="erroneous initiation">
        <sequence resource="EMBL-CDS" id="EAQ72274"/>
    </conflict>
</comment>
<accession>A1VZK8</accession>
<accession>Q46097</accession>
<accession>Q9PP58</accession>
<organism>
    <name type="scientific">Campylobacter jejuni subsp. jejuni serotype O:23/36 (strain 81-176)</name>
    <dbReference type="NCBI Taxonomy" id="354242"/>
    <lineage>
        <taxon>Bacteria</taxon>
        <taxon>Pseudomonadati</taxon>
        <taxon>Campylobacterota</taxon>
        <taxon>Epsilonproteobacteria</taxon>
        <taxon>Campylobacterales</taxon>
        <taxon>Campylobacteraceae</taxon>
        <taxon>Campylobacter</taxon>
    </lineage>
</organism>
<sequence length="269" mass="30798">MSCIKMKDNCRNFSLSKWQDTRKPWLILIIVTIGLTCIAHFLFQEYLFMEPCEQCVYIRFDMLVMAIGGMIALINPTNNIIKIFSYSLAFYGIWLGLEHCLTLNHIHEVVHSENPFAGVDGCREIPIYPFNLPLHEWAPSWFLPIGECGMDTPVVPENAYNHLNAFQKFFIGTPPDFENGLYSNGWYLIPSLKFINMAICCLIAFLCCFIVLFAMFIAYVLDKNKPNAKIFALAIVILVLVLKFIGEPKNPNQNIASLNHLNQVVLRYS</sequence>
<proteinExistence type="inferred from homology"/>
<dbReference type="EMBL" id="U38280">
    <property type="protein sequence ID" value="AAB18371.1"/>
    <property type="molecule type" value="Genomic_DNA"/>
</dbReference>
<dbReference type="EMBL" id="CP000538">
    <property type="protein sequence ID" value="EAQ72274.1"/>
    <property type="status" value="ALT_INIT"/>
    <property type="molecule type" value="Genomic_DNA"/>
</dbReference>
<dbReference type="RefSeq" id="WP_002869425.1">
    <property type="nucleotide sequence ID" value="NC_008787.1"/>
</dbReference>
<dbReference type="KEGG" id="cjj:CJJ81176_0881"/>
<dbReference type="eggNOG" id="COG1495">
    <property type="taxonomic scope" value="Bacteria"/>
</dbReference>
<dbReference type="HOGENOM" id="CLU_090583_0_0_7"/>
<dbReference type="Proteomes" id="UP000000646">
    <property type="component" value="Chromosome"/>
</dbReference>
<dbReference type="GO" id="GO:0005886">
    <property type="term" value="C:plasma membrane"/>
    <property type="evidence" value="ECO:0007669"/>
    <property type="project" value="UniProtKB-SubCell"/>
</dbReference>
<dbReference type="GO" id="GO:0015035">
    <property type="term" value="F:protein-disulfide reductase activity"/>
    <property type="evidence" value="ECO:0007669"/>
    <property type="project" value="InterPro"/>
</dbReference>
<dbReference type="GO" id="GO:0006457">
    <property type="term" value="P:protein folding"/>
    <property type="evidence" value="ECO:0007669"/>
    <property type="project" value="InterPro"/>
</dbReference>
<dbReference type="Gene3D" id="1.20.1550.10">
    <property type="entry name" value="DsbB-like"/>
    <property type="match status" value="1"/>
</dbReference>
<dbReference type="InterPro" id="IPR003752">
    <property type="entry name" value="DiS_bond_form_DsbB/BdbC"/>
</dbReference>
<dbReference type="InterPro" id="IPR050183">
    <property type="entry name" value="DsbB"/>
</dbReference>
<dbReference type="InterPro" id="IPR023380">
    <property type="entry name" value="DsbB-like_sf"/>
</dbReference>
<dbReference type="NCBIfam" id="NF003304">
    <property type="entry name" value="PRK04307.1"/>
    <property type="match status" value="1"/>
</dbReference>
<dbReference type="PANTHER" id="PTHR36570">
    <property type="entry name" value="DISULFIDE BOND FORMATION PROTEIN B"/>
    <property type="match status" value="1"/>
</dbReference>
<dbReference type="PANTHER" id="PTHR36570:SF1">
    <property type="entry name" value="PROTEIN-DISULFIDE OXIDOREDUCTASE DSBI"/>
    <property type="match status" value="1"/>
</dbReference>
<dbReference type="Pfam" id="PF02600">
    <property type="entry name" value="DsbB"/>
    <property type="match status" value="1"/>
</dbReference>
<dbReference type="SUPFAM" id="SSF158442">
    <property type="entry name" value="DsbB-like"/>
    <property type="match status" value="1"/>
</dbReference>
<evidence type="ECO:0000250" key="1"/>
<evidence type="ECO:0000255" key="2"/>
<evidence type="ECO:0000305" key="3"/>
<name>DSBI_CAMJJ</name>
<keyword id="KW-0997">Cell inner membrane</keyword>
<keyword id="KW-1003">Cell membrane</keyword>
<keyword id="KW-1015">Disulfide bond</keyword>
<keyword id="KW-0249">Electron transport</keyword>
<keyword id="KW-0472">Membrane</keyword>
<keyword id="KW-0560">Oxidoreductase</keyword>
<keyword id="KW-0676">Redox-active center</keyword>
<keyword id="KW-0812">Transmembrane</keyword>
<keyword id="KW-1133">Transmembrane helix</keyword>
<keyword id="KW-0813">Transport</keyword>
<feature type="chain" id="PRO_0000281900" description="Putative protein-disulfide oxidoreductase DsbI">
    <location>
        <begin position="1"/>
        <end position="269"/>
    </location>
</feature>
<feature type="transmembrane region" description="Helical" evidence="2">
    <location>
        <begin position="25"/>
        <end position="47"/>
    </location>
</feature>
<feature type="transmembrane region" description="Helical" evidence="2">
    <location>
        <begin position="62"/>
        <end position="81"/>
    </location>
</feature>
<feature type="transmembrane region" description="Helical" evidence="2">
    <location>
        <begin position="198"/>
        <end position="220"/>
    </location>
</feature>
<feature type="transmembrane region" description="Helical" evidence="2">
    <location>
        <begin position="230"/>
        <end position="247"/>
    </location>
</feature>
<feature type="disulfide bond" description="Redox-active" evidence="1">
    <location>
        <begin position="52"/>
        <end position="55"/>
    </location>
</feature>
<feature type="disulfide bond" description="Redox-active" evidence="1">
    <location>
        <begin position="122"/>
        <end position="148"/>
    </location>
</feature>